<reference key="1">
    <citation type="journal article" date="1999" name="Nature">
        <title>Sequence and analysis of chromosome 4 of the plant Arabidopsis thaliana.</title>
        <authorList>
            <person name="Mayer K.F.X."/>
            <person name="Schueller C."/>
            <person name="Wambutt R."/>
            <person name="Murphy G."/>
            <person name="Volckaert G."/>
            <person name="Pohl T."/>
            <person name="Duesterhoeft A."/>
            <person name="Stiekema W."/>
            <person name="Entian K.-D."/>
            <person name="Terryn N."/>
            <person name="Harris B."/>
            <person name="Ansorge W."/>
            <person name="Brandt P."/>
            <person name="Grivell L.A."/>
            <person name="Rieger M."/>
            <person name="Weichselgartner M."/>
            <person name="de Simone V."/>
            <person name="Obermaier B."/>
            <person name="Mache R."/>
            <person name="Mueller M."/>
            <person name="Kreis M."/>
            <person name="Delseny M."/>
            <person name="Puigdomenech P."/>
            <person name="Watson M."/>
            <person name="Schmidtheini T."/>
            <person name="Reichert B."/>
            <person name="Portetelle D."/>
            <person name="Perez-Alonso M."/>
            <person name="Boutry M."/>
            <person name="Bancroft I."/>
            <person name="Vos P."/>
            <person name="Hoheisel J."/>
            <person name="Zimmermann W."/>
            <person name="Wedler H."/>
            <person name="Ridley P."/>
            <person name="Langham S.-A."/>
            <person name="McCullagh B."/>
            <person name="Bilham L."/>
            <person name="Robben J."/>
            <person name="van der Schueren J."/>
            <person name="Grymonprez B."/>
            <person name="Chuang Y.-J."/>
            <person name="Vandenbussche F."/>
            <person name="Braeken M."/>
            <person name="Weltjens I."/>
            <person name="Voet M."/>
            <person name="Bastiaens I."/>
            <person name="Aert R."/>
            <person name="Defoor E."/>
            <person name="Weitzenegger T."/>
            <person name="Bothe G."/>
            <person name="Ramsperger U."/>
            <person name="Hilbert H."/>
            <person name="Braun M."/>
            <person name="Holzer E."/>
            <person name="Brandt A."/>
            <person name="Peters S."/>
            <person name="van Staveren M."/>
            <person name="Dirkse W."/>
            <person name="Mooijman P."/>
            <person name="Klein Lankhorst R."/>
            <person name="Rose M."/>
            <person name="Hauf J."/>
            <person name="Koetter P."/>
            <person name="Berneiser S."/>
            <person name="Hempel S."/>
            <person name="Feldpausch M."/>
            <person name="Lamberth S."/>
            <person name="Van den Daele H."/>
            <person name="De Keyser A."/>
            <person name="Buysshaert C."/>
            <person name="Gielen J."/>
            <person name="Villarroel R."/>
            <person name="De Clercq R."/>
            <person name="van Montagu M."/>
            <person name="Rogers J."/>
            <person name="Cronin A."/>
            <person name="Quail M.A."/>
            <person name="Bray-Allen S."/>
            <person name="Clark L."/>
            <person name="Doggett J."/>
            <person name="Hall S."/>
            <person name="Kay M."/>
            <person name="Lennard N."/>
            <person name="McLay K."/>
            <person name="Mayes R."/>
            <person name="Pettett A."/>
            <person name="Rajandream M.A."/>
            <person name="Lyne M."/>
            <person name="Benes V."/>
            <person name="Rechmann S."/>
            <person name="Borkova D."/>
            <person name="Bloecker H."/>
            <person name="Scharfe M."/>
            <person name="Grimm M."/>
            <person name="Loehnert T.-H."/>
            <person name="Dose S."/>
            <person name="de Haan M."/>
            <person name="Maarse A.C."/>
            <person name="Schaefer M."/>
            <person name="Mueller-Auer S."/>
            <person name="Gabel C."/>
            <person name="Fuchs M."/>
            <person name="Fartmann B."/>
            <person name="Granderath K."/>
            <person name="Dauner D."/>
            <person name="Herzl A."/>
            <person name="Neumann S."/>
            <person name="Argiriou A."/>
            <person name="Vitale D."/>
            <person name="Liguori R."/>
            <person name="Piravandi E."/>
            <person name="Massenet O."/>
            <person name="Quigley F."/>
            <person name="Clabauld G."/>
            <person name="Muendlein A."/>
            <person name="Felber R."/>
            <person name="Schnabl S."/>
            <person name="Hiller R."/>
            <person name="Schmidt W."/>
            <person name="Lecharny A."/>
            <person name="Aubourg S."/>
            <person name="Chefdor F."/>
            <person name="Cooke R."/>
            <person name="Berger C."/>
            <person name="Monfort A."/>
            <person name="Casacuberta E."/>
            <person name="Gibbons T."/>
            <person name="Weber N."/>
            <person name="Vandenbol M."/>
            <person name="Bargues M."/>
            <person name="Terol J."/>
            <person name="Torres A."/>
            <person name="Perez-Perez A."/>
            <person name="Purnelle B."/>
            <person name="Bent E."/>
            <person name="Johnson S."/>
            <person name="Tacon D."/>
            <person name="Jesse T."/>
            <person name="Heijnen L."/>
            <person name="Schwarz S."/>
            <person name="Scholler P."/>
            <person name="Heber S."/>
            <person name="Francs P."/>
            <person name="Bielke C."/>
            <person name="Frishman D."/>
            <person name="Haase D."/>
            <person name="Lemcke K."/>
            <person name="Mewes H.-W."/>
            <person name="Stocker S."/>
            <person name="Zaccaria P."/>
            <person name="Bevan M."/>
            <person name="Wilson R.K."/>
            <person name="de la Bastide M."/>
            <person name="Habermann K."/>
            <person name="Parnell L."/>
            <person name="Dedhia N."/>
            <person name="Gnoj L."/>
            <person name="Schutz K."/>
            <person name="Huang E."/>
            <person name="Spiegel L."/>
            <person name="Sekhon M."/>
            <person name="Murray J."/>
            <person name="Sheet P."/>
            <person name="Cordes M."/>
            <person name="Abu-Threideh J."/>
            <person name="Stoneking T."/>
            <person name="Kalicki J."/>
            <person name="Graves T."/>
            <person name="Harmon G."/>
            <person name="Edwards J."/>
            <person name="Latreille P."/>
            <person name="Courtney L."/>
            <person name="Cloud J."/>
            <person name="Abbott A."/>
            <person name="Scott K."/>
            <person name="Johnson D."/>
            <person name="Minx P."/>
            <person name="Bentley D."/>
            <person name="Fulton B."/>
            <person name="Miller N."/>
            <person name="Greco T."/>
            <person name="Kemp K."/>
            <person name="Kramer J."/>
            <person name="Fulton L."/>
            <person name="Mardis E."/>
            <person name="Dante M."/>
            <person name="Pepin K."/>
            <person name="Hillier L.W."/>
            <person name="Nelson J."/>
            <person name="Spieth J."/>
            <person name="Ryan E."/>
            <person name="Andrews S."/>
            <person name="Geisel C."/>
            <person name="Layman D."/>
            <person name="Du H."/>
            <person name="Ali J."/>
            <person name="Berghoff A."/>
            <person name="Jones K."/>
            <person name="Drone K."/>
            <person name="Cotton M."/>
            <person name="Joshu C."/>
            <person name="Antonoiu B."/>
            <person name="Zidanic M."/>
            <person name="Strong C."/>
            <person name="Sun H."/>
            <person name="Lamar B."/>
            <person name="Yordan C."/>
            <person name="Ma P."/>
            <person name="Zhong J."/>
            <person name="Preston R."/>
            <person name="Vil D."/>
            <person name="Shekher M."/>
            <person name="Matero A."/>
            <person name="Shah R."/>
            <person name="Swaby I.K."/>
            <person name="O'Shaughnessy A."/>
            <person name="Rodriguez M."/>
            <person name="Hoffman J."/>
            <person name="Till S."/>
            <person name="Granat S."/>
            <person name="Shohdy N."/>
            <person name="Hasegawa A."/>
            <person name="Hameed A."/>
            <person name="Lodhi M."/>
            <person name="Johnson A."/>
            <person name="Chen E."/>
            <person name="Marra M.A."/>
            <person name="Martienssen R."/>
            <person name="McCombie W.R."/>
        </authorList>
    </citation>
    <scope>NUCLEOTIDE SEQUENCE [LARGE SCALE GENOMIC DNA]</scope>
    <source>
        <strain>cv. Columbia</strain>
    </source>
</reference>
<reference key="2">
    <citation type="journal article" date="2017" name="Plant J.">
        <title>Araport11: a complete reannotation of the Arabidopsis thaliana reference genome.</title>
        <authorList>
            <person name="Cheng C.Y."/>
            <person name="Krishnakumar V."/>
            <person name="Chan A.P."/>
            <person name="Thibaud-Nissen F."/>
            <person name="Schobel S."/>
            <person name="Town C.D."/>
        </authorList>
    </citation>
    <scope>GENOME REANNOTATION</scope>
    <source>
        <strain>cv. Columbia</strain>
    </source>
</reference>
<reference key="3">
    <citation type="journal article" date="2004" name="Genome Res.">
        <title>Whole genome sequence comparisons and 'full-length' cDNA sequences: a combined approach to evaluate and improve Arabidopsis genome annotation.</title>
        <authorList>
            <person name="Castelli V."/>
            <person name="Aury J.-M."/>
            <person name="Jaillon O."/>
            <person name="Wincker P."/>
            <person name="Clepet C."/>
            <person name="Menard M."/>
            <person name="Cruaud C."/>
            <person name="Quetier F."/>
            <person name="Scarpelli C."/>
            <person name="Schaechter V."/>
            <person name="Temple G."/>
            <person name="Caboche M."/>
            <person name="Weissenbach J."/>
            <person name="Salanoubat M."/>
        </authorList>
    </citation>
    <scope>NUCLEOTIDE SEQUENCE [LARGE SCALE MRNA] OF 782-1190</scope>
    <source>
        <strain>cv. Columbia</strain>
    </source>
</reference>
<reference key="4">
    <citation type="journal article" date="2005" name="Plant J.">
        <title>Requirement of aminoacyl-tRNA synthetases for gametogenesis and embryo development in Arabidopsis.</title>
        <authorList>
            <person name="Berg M."/>
            <person name="Rogers R."/>
            <person name="Muralla R."/>
            <person name="Meinke D."/>
        </authorList>
    </citation>
    <scope>SUBCELLULAR LOCATION</scope>
</reference>
<reference key="5">
    <citation type="journal article" date="2005" name="Proc. Natl. Acad. Sci. U.S.A.">
        <title>Dual targeting is the rule for organellar aminoacyl-tRNA synthetases in Arabidopsis thaliana.</title>
        <authorList>
            <person name="Duchene A.-M."/>
            <person name="Giritch A."/>
            <person name="Hoffmann B."/>
            <person name="Cognat V."/>
            <person name="Lancelin D."/>
            <person name="Peeters N.M."/>
            <person name="Zaepfel M."/>
            <person name="Marechal-Drouard L."/>
            <person name="Small I.D."/>
        </authorList>
    </citation>
    <scope>SUBCELLULAR LOCATION</scope>
</reference>
<evidence type="ECO:0000250" key="1"/>
<evidence type="ECO:0000256" key="2">
    <source>
        <dbReference type="SAM" id="MobiDB-lite"/>
    </source>
</evidence>
<evidence type="ECO:0000305" key="3"/>
<evidence type="ECO:0000305" key="4">
    <source>
    </source>
</evidence>
<evidence type="ECO:0000305" key="5">
    <source>
    </source>
</evidence>
<evidence type="ECO:0000312" key="6">
    <source>
        <dbReference type="Araport" id="AT4G10320"/>
    </source>
</evidence>
<evidence type="ECO:0000312" key="7">
    <source>
        <dbReference type="EMBL" id="AAC62806.1"/>
    </source>
</evidence>
<evidence type="ECO:0000312" key="8">
    <source>
        <dbReference type="EMBL" id="CAB39785.1"/>
    </source>
</evidence>
<dbReference type="EC" id="6.1.1.5" evidence="3"/>
<dbReference type="EMBL" id="AF096373">
    <property type="protein sequence ID" value="AAC62806.1"/>
    <property type="status" value="ALT_SEQ"/>
    <property type="molecule type" value="Genomic_DNA"/>
</dbReference>
<dbReference type="EMBL" id="AL049488">
    <property type="protein sequence ID" value="CAB39785.1"/>
    <property type="status" value="ALT_SEQ"/>
    <property type="molecule type" value="Genomic_DNA"/>
</dbReference>
<dbReference type="EMBL" id="AL161517">
    <property type="protein sequence ID" value="CAB78155.1"/>
    <property type="status" value="ALT_SEQ"/>
    <property type="molecule type" value="Genomic_DNA"/>
</dbReference>
<dbReference type="EMBL" id="CP002687">
    <property type="protein sequence ID" value="AEE82867.1"/>
    <property type="molecule type" value="Genomic_DNA"/>
</dbReference>
<dbReference type="EMBL" id="BX827114">
    <property type="status" value="NOT_ANNOTATED_CDS"/>
    <property type="molecule type" value="mRNA"/>
</dbReference>
<dbReference type="PIR" id="T01968">
    <property type="entry name" value="T01968"/>
</dbReference>
<dbReference type="PIR" id="T04047">
    <property type="entry name" value="T04047"/>
</dbReference>
<dbReference type="RefSeq" id="NP_192770.2">
    <property type="nucleotide sequence ID" value="NM_117100.4"/>
</dbReference>
<dbReference type="SMR" id="F4JLM5"/>
<dbReference type="FunCoup" id="F4JLM5">
    <property type="interactions" value="4409"/>
</dbReference>
<dbReference type="IntAct" id="F4JLM5">
    <property type="interactions" value="1"/>
</dbReference>
<dbReference type="STRING" id="3702.F4JLM5"/>
<dbReference type="iPTMnet" id="F4JLM5"/>
<dbReference type="PaxDb" id="3702-AT4G10320.1"/>
<dbReference type="ProteomicsDB" id="234105"/>
<dbReference type="EnsemblPlants" id="AT4G10320.1">
    <property type="protein sequence ID" value="AT4G10320.1"/>
    <property type="gene ID" value="AT4G10320"/>
</dbReference>
<dbReference type="GeneID" id="826624"/>
<dbReference type="Gramene" id="AT4G10320.1">
    <property type="protein sequence ID" value="AT4G10320.1"/>
    <property type="gene ID" value="AT4G10320"/>
</dbReference>
<dbReference type="KEGG" id="ath:AT4G10320"/>
<dbReference type="Araport" id="AT4G10320"/>
<dbReference type="TAIR" id="AT4G10320"/>
<dbReference type="eggNOG" id="KOG0434">
    <property type="taxonomic scope" value="Eukaryota"/>
</dbReference>
<dbReference type="HOGENOM" id="CLU_001493_1_1_1"/>
<dbReference type="InParanoid" id="F4JLM5"/>
<dbReference type="OMA" id="LLTYWNT"/>
<dbReference type="CD-CODE" id="4299E36E">
    <property type="entry name" value="Nucleolus"/>
</dbReference>
<dbReference type="PRO" id="PR:F4JLM5"/>
<dbReference type="Proteomes" id="UP000006548">
    <property type="component" value="Chromosome 4"/>
</dbReference>
<dbReference type="ExpressionAtlas" id="F4JLM5">
    <property type="expression patterns" value="baseline and differential"/>
</dbReference>
<dbReference type="GO" id="GO:0005829">
    <property type="term" value="C:cytosol"/>
    <property type="evidence" value="ECO:0007005"/>
    <property type="project" value="TAIR"/>
</dbReference>
<dbReference type="GO" id="GO:0002161">
    <property type="term" value="F:aminoacyl-tRNA deacylase activity"/>
    <property type="evidence" value="ECO:0007669"/>
    <property type="project" value="InterPro"/>
</dbReference>
<dbReference type="GO" id="GO:0005524">
    <property type="term" value="F:ATP binding"/>
    <property type="evidence" value="ECO:0007669"/>
    <property type="project" value="UniProtKB-KW"/>
</dbReference>
<dbReference type="GO" id="GO:0004822">
    <property type="term" value="F:isoleucine-tRNA ligase activity"/>
    <property type="evidence" value="ECO:0007669"/>
    <property type="project" value="UniProtKB-EC"/>
</dbReference>
<dbReference type="GO" id="GO:0000049">
    <property type="term" value="F:tRNA binding"/>
    <property type="evidence" value="ECO:0007669"/>
    <property type="project" value="InterPro"/>
</dbReference>
<dbReference type="GO" id="GO:0006428">
    <property type="term" value="P:isoleucyl-tRNA aminoacylation"/>
    <property type="evidence" value="ECO:0007669"/>
    <property type="project" value="InterPro"/>
</dbReference>
<dbReference type="GO" id="GO:0009791">
    <property type="term" value="P:post-embryonic development"/>
    <property type="evidence" value="ECO:0007669"/>
    <property type="project" value="UniProtKB-ARBA"/>
</dbReference>
<dbReference type="GO" id="GO:0048608">
    <property type="term" value="P:reproductive structure development"/>
    <property type="evidence" value="ECO:0007669"/>
    <property type="project" value="UniProtKB-ARBA"/>
</dbReference>
<dbReference type="CDD" id="cd07961">
    <property type="entry name" value="Anticodon_Ia_Ile_ABEc"/>
    <property type="match status" value="1"/>
</dbReference>
<dbReference type="CDD" id="cd00818">
    <property type="entry name" value="IleRS_core"/>
    <property type="match status" value="1"/>
</dbReference>
<dbReference type="FunFam" id="1.10.730.10:FF:000025">
    <property type="entry name" value="Isoleucine--tRNA ligase cytoplasmic"/>
    <property type="match status" value="1"/>
</dbReference>
<dbReference type="FunFam" id="3.40.50.620:FF:000105">
    <property type="entry name" value="Isoleucine--tRNA ligase cytoplasmic"/>
    <property type="match status" value="1"/>
</dbReference>
<dbReference type="FunFam" id="3.40.50.620:FF:000023">
    <property type="entry name" value="Isoleucyl-tRNA synthetase,cytoplasmic"/>
    <property type="match status" value="1"/>
</dbReference>
<dbReference type="Gene3D" id="3.40.50.620">
    <property type="entry name" value="HUPs"/>
    <property type="match status" value="2"/>
</dbReference>
<dbReference type="Gene3D" id="1.10.730.10">
    <property type="entry name" value="Isoleucyl-tRNA Synthetase, Domain 1"/>
    <property type="match status" value="1"/>
</dbReference>
<dbReference type="HAMAP" id="MF_02003">
    <property type="entry name" value="Ile_tRNA_synth_type2"/>
    <property type="match status" value="1"/>
</dbReference>
<dbReference type="InterPro" id="IPR001412">
    <property type="entry name" value="aa-tRNA-synth_I_CS"/>
</dbReference>
<dbReference type="InterPro" id="IPR002300">
    <property type="entry name" value="aa-tRNA-synth_Ia"/>
</dbReference>
<dbReference type="InterPro" id="IPR033709">
    <property type="entry name" value="Anticodon_Ile_ABEc"/>
</dbReference>
<dbReference type="InterPro" id="IPR002301">
    <property type="entry name" value="Ile-tRNA-ligase"/>
</dbReference>
<dbReference type="InterPro" id="IPR023586">
    <property type="entry name" value="Ile-tRNA-ligase_type2"/>
</dbReference>
<dbReference type="InterPro" id="IPR013155">
    <property type="entry name" value="M/V/L/I-tRNA-synth_anticd-bd"/>
</dbReference>
<dbReference type="InterPro" id="IPR014729">
    <property type="entry name" value="Rossmann-like_a/b/a_fold"/>
</dbReference>
<dbReference type="InterPro" id="IPR009080">
    <property type="entry name" value="tRNAsynth_Ia_anticodon-bd"/>
</dbReference>
<dbReference type="InterPro" id="IPR009008">
    <property type="entry name" value="Val/Leu/Ile-tRNA-synth_edit"/>
</dbReference>
<dbReference type="NCBIfam" id="TIGR00392">
    <property type="entry name" value="ileS"/>
    <property type="match status" value="1"/>
</dbReference>
<dbReference type="PANTHER" id="PTHR42780:SF1">
    <property type="entry name" value="ISOLEUCINE--TRNA LIGASE, CYTOPLASMIC"/>
    <property type="match status" value="1"/>
</dbReference>
<dbReference type="PANTHER" id="PTHR42780">
    <property type="entry name" value="SOLEUCYL-TRNA SYNTHETASE"/>
    <property type="match status" value="1"/>
</dbReference>
<dbReference type="Pfam" id="PF08264">
    <property type="entry name" value="Anticodon_1"/>
    <property type="match status" value="1"/>
</dbReference>
<dbReference type="Pfam" id="PF19302">
    <property type="entry name" value="DUF5915"/>
    <property type="match status" value="1"/>
</dbReference>
<dbReference type="Pfam" id="PF00133">
    <property type="entry name" value="tRNA-synt_1"/>
    <property type="match status" value="1"/>
</dbReference>
<dbReference type="PRINTS" id="PR00984">
    <property type="entry name" value="TRNASYNTHILE"/>
</dbReference>
<dbReference type="SUPFAM" id="SSF47323">
    <property type="entry name" value="Anticodon-binding domain of a subclass of class I aminoacyl-tRNA synthetases"/>
    <property type="match status" value="1"/>
</dbReference>
<dbReference type="SUPFAM" id="SSF52374">
    <property type="entry name" value="Nucleotidylyl transferase"/>
    <property type="match status" value="1"/>
</dbReference>
<dbReference type="SUPFAM" id="SSF50677">
    <property type="entry name" value="ValRS/IleRS/LeuRS editing domain"/>
    <property type="match status" value="1"/>
</dbReference>
<dbReference type="PROSITE" id="PS00178">
    <property type="entry name" value="AA_TRNA_LIGASE_I"/>
    <property type="match status" value="1"/>
</dbReference>
<gene>
    <name evidence="6" type="ordered locus">At4g10320</name>
    <name evidence="8" type="ORF">F24G24.120</name>
    <name evidence="7" type="ORF">T9A4.4</name>
</gene>
<name>SYIC_ARATH</name>
<feature type="chain" id="PRO_0000433536" description="Isoleucine--tRNA ligase, cytoplasmic">
    <location>
        <begin position="1"/>
        <end position="1190"/>
    </location>
</feature>
<feature type="region of interest" description="Disordered" evidence="2">
    <location>
        <begin position="271"/>
        <end position="299"/>
    </location>
</feature>
<feature type="short sequence motif" description="'HIGH' region" evidence="3">
    <location>
        <begin position="49"/>
        <end position="59"/>
    </location>
</feature>
<feature type="short sequence motif" description="'KMSKS' region" evidence="3">
    <location>
        <begin position="632"/>
        <end position="636"/>
    </location>
</feature>
<feature type="binding site" evidence="1">
    <location>
        <position position="635"/>
    </location>
    <ligand>
        <name>ATP</name>
        <dbReference type="ChEBI" id="CHEBI:30616"/>
    </ligand>
</feature>
<protein>
    <recommendedName>
        <fullName evidence="3">Isoleucine--tRNA ligase, cytoplasmic</fullName>
        <ecNumber evidence="3">6.1.1.5</ecNumber>
    </recommendedName>
    <alternativeName>
        <fullName evidence="3">Isoleucyl-tRNA synthetase</fullName>
        <shortName evidence="3">IleRS</shortName>
    </alternativeName>
</protein>
<comment type="catalytic activity">
    <reaction evidence="3">
        <text>tRNA(Ile) + L-isoleucine + ATP = L-isoleucyl-tRNA(Ile) + AMP + diphosphate</text>
        <dbReference type="Rhea" id="RHEA:11060"/>
        <dbReference type="Rhea" id="RHEA-COMP:9666"/>
        <dbReference type="Rhea" id="RHEA-COMP:9695"/>
        <dbReference type="ChEBI" id="CHEBI:30616"/>
        <dbReference type="ChEBI" id="CHEBI:33019"/>
        <dbReference type="ChEBI" id="CHEBI:58045"/>
        <dbReference type="ChEBI" id="CHEBI:78442"/>
        <dbReference type="ChEBI" id="CHEBI:78528"/>
        <dbReference type="ChEBI" id="CHEBI:456215"/>
        <dbReference type="EC" id="6.1.1.5"/>
    </reaction>
</comment>
<comment type="subcellular location">
    <subcellularLocation>
        <location evidence="4 5">Cytoplasm</location>
        <location evidence="4 5">Cytosol</location>
    </subcellularLocation>
</comment>
<comment type="similarity">
    <text evidence="3">Belongs to the class-I aminoacyl-tRNA synthetase family.</text>
</comment>
<comment type="sequence caution" evidence="3">
    <conflict type="erroneous gene model prediction">
        <sequence resource="EMBL-CDS" id="AAC62806"/>
    </conflict>
</comment>
<comment type="sequence caution" evidence="3">
    <conflict type="erroneous gene model prediction">
        <sequence resource="EMBL-CDS" id="CAB39785"/>
    </conflict>
</comment>
<comment type="sequence caution" evidence="3">
    <conflict type="erroneous gene model prediction">
        <sequence resource="EMBL-CDS" id="CAB78155"/>
    </conflict>
</comment>
<proteinExistence type="evidence at transcript level"/>
<organism>
    <name type="scientific">Arabidopsis thaliana</name>
    <name type="common">Mouse-ear cress</name>
    <dbReference type="NCBI Taxonomy" id="3702"/>
    <lineage>
        <taxon>Eukaryota</taxon>
        <taxon>Viridiplantae</taxon>
        <taxon>Streptophyta</taxon>
        <taxon>Embryophyta</taxon>
        <taxon>Tracheophyta</taxon>
        <taxon>Spermatophyta</taxon>
        <taxon>Magnoliopsida</taxon>
        <taxon>eudicotyledons</taxon>
        <taxon>Gunneridae</taxon>
        <taxon>Pentapetalae</taxon>
        <taxon>rosids</taxon>
        <taxon>malvids</taxon>
        <taxon>Brassicales</taxon>
        <taxon>Brassicaceae</taxon>
        <taxon>Camelineae</taxon>
        <taxon>Arabidopsis</taxon>
    </lineage>
</organism>
<keyword id="KW-0030">Aminoacyl-tRNA synthetase</keyword>
<keyword id="KW-0067">ATP-binding</keyword>
<keyword id="KW-0963">Cytoplasm</keyword>
<keyword id="KW-0436">Ligase</keyword>
<keyword id="KW-0547">Nucleotide-binding</keyword>
<keyword id="KW-0648">Protein biosynthesis</keyword>
<keyword id="KW-1185">Reference proteome</keyword>
<sequence length="1190" mass="135484">MEEVCEGKEFSFPRQEEDVLSFWTEIDAFKTQLKRTENLPEYIFYDGPPFATGLPHYGHILAGTIKDIVTRYQTMTGHHVTRRFGWDCHGLPVENEIDRKLNIKRRDEVIKMGIDKYNEECRSIVTRYVAEWEKVITRCGRWIDFKNDYKTMDLPFMESVWWVFSQLWEKNLVYRGFKVMPYSTGCKTPLSNFEAGQNYKEVPDPEIMVTFPVIGDQDNAAFVAWTTTPWTLPSNLALCVNAKFVYVKVRNKNTGKVYIVAESRLSALPTDKPKAKLSNGPAGDTKKANPKAKGAKPESAADSYEVLEKFNGASLVGKKYEPLFDYFSDFSSEAFRVVADDYVTDDSGTGIVHCAPAFGEDDYRVCLLNKIIKKGENLVVAVDDDGLFTERITHFSGRYVKDADKDIIEAVKAKGRLVKTGSFTHSYPFCWRSDTPLIYRAVPSWFVRVEQLKEKLLKSNEQTEWVPGYVKDKRFHNWLENARDWAISRSRFWGTPLPIWISDDGEEVVIMDSVEKLEKLSGVKVFDLHRHHIDHITIPSSRGDEFGVLRRVEDVFDCWFESGSMPYAYIHYPFENKELFEKNFPGDFVAEGLDQTRGWFYTLMVLSTALFEKPAFKNLICNGLVLAEDGKKMAKKLRNYPPPLEVIDEYGADAVRLYLINSPVVRAEPLRFKKEGVLGVVKDVFLPWYNAYRFLVQNAKRLETEGGVPFVPTDLATIQSANILDQWIHSATQSLVRFVREEMDAYRLYTVVPRLLKFLDNLTNIYVRFNRKRLKGRTGEDDCHTALSTLFNVLLTSCKVMAPFTPFFTETLYQNLRKACKGSEESVHYCSIPPREGMEGERIELSVTRMMKIIDLARNIRERNKLPLKTPLKEMIVVHPDADFLNDITGVLREYVLEELNVRSLVPCNDTLKYASLKAEPDFSVLGKRLGKSMGLVAKEVKEMSQKDILAFEEAGEVTIANHLLKETDIKIVRVFKRPDDLKENEIDSAGDGDVLVILDLRADDSLVEAGFAREIVNRIQKLRKKSGLEPTDFVEVYFQSLDEDESVSKQVLVSQEQNIKDSIGSTLLLSSLMPSHAVIIADETFTPKETSDESVKKVPKLSYKISLARPALKFNEEAVLALYSGDVKSATGLQTYLLSRDHSNLKSEFQAGDGKITVSCIENVPVATVVLGEHLHLSVGDDLLSKRNA</sequence>
<accession>F4JLM5</accession>
<accession>O82613</accession>
<accession>Q9SV89</accession>